<sequence length="1177" mass="131891">MTGQLVQYGRHRQRRSYARISEVLELPNLIEIQTSSYQWFLDEGLREMFQDISPIEDFTGNLSLEFIDYSLGEPKYSVDECKERDVTYAAPLRVKVRLINKETGEVKEQDVFMGDFPLMTETGTFVINGAERVIVSQLVRSPSVYYSGKVDKNGKRGFTATVIPNRGAWLEYETDAKDVVYVRIDRTRKLPVTVLLRALGFGSDQEITELLGDNEYLSNTLEKDNTDSTEKALLEIYERLRPGEPPTVENAKSLLVSRFFDPKRYDLANVGRYKINKKLHIKNRLFNQRLAETLVDPETGEILAAEGTILDRRTLDRILPYLEKNIGFKTAKPMGGVVEGDVELQSIKIYAPESEGERVINVIGNANITRDVKHITPGDILASISYFFNLLYKVGDTDDIDHLGNRRLRSVGELLQNQFRIGLSRMERVVRERMSIQDTNAITPQALINIRPVIAAIKEFFGSSQLSQFMDQTNPLAELTHKRRLSALGPGGLTRERAGFEVRDVHYSHYGRMCPIETPEGPNIGLINSLSSFAKVNEFGFIETPYRRVDPETGLVTGHVDYLTADEEDNYVVAQANMKLSEEGEFLDEDIVARFRGENIVTNKERIDYMDVSPKQVVSAATACIPFLENDDSNRALMGANMQRQAVPLMNPESPIVGTGMEYVSAKDSGAAVICKHPGIVERVEAREVWVRRYVEVDGQTVKGDLDRYKMQKFIRSNQGTCYNQRPIVSVGNEVVKGEILADGPSMELGELALGRNVLVGFMTWDGYNYEDAIIMSERLVKDDVYTSIHIEEYESEARDTKLGPEEITRDIPNVGEDALRNLDERGIIRVGAEVKDGDLLVGKVTPKGVTELTAEERLLHAIFGEKAREVRDTSLRVPHGGGGIILDVKVFNREDGDELPPGVNQLVRAYIVQKRKISEGDKMAGRHGNKGVISRILPEEDMPYLPDGTPIDIMLNPLGVPSRMNIGQVLELHLGMAARYLGIHIATPVFDGAREEDVWGTIEEAGMANDAKTILYDGRTGEPFDNRVSVGVMYMIKLAHMVDDKLHARSTGPYSLVTQQPLGGKAQFGGQRFGEMEVWALEAYGAAYTLQEILTVKSDDVIGRVKTYEAIVKGENVPEPGVPESFKVLIKELQSLGMDVKMMSSDDTEIEMRDTEDDDDHQSADKLNVEVETTKE</sequence>
<gene>
    <name evidence="1" type="primary">rpoB</name>
    <name type="ordered locus">BAA_0118</name>
</gene>
<feature type="chain" id="PRO_1000165786" description="DNA-directed RNA polymerase subunit beta">
    <location>
        <begin position="1"/>
        <end position="1177"/>
    </location>
</feature>
<feature type="region of interest" description="Disordered" evidence="2">
    <location>
        <begin position="1147"/>
        <end position="1177"/>
    </location>
</feature>
<feature type="compositionally biased region" description="Acidic residues" evidence="2">
    <location>
        <begin position="1147"/>
        <end position="1161"/>
    </location>
</feature>
<feature type="compositionally biased region" description="Basic and acidic residues" evidence="2">
    <location>
        <begin position="1162"/>
        <end position="1177"/>
    </location>
</feature>
<accession>C3P9P7</accession>
<keyword id="KW-0240">DNA-directed RNA polymerase</keyword>
<keyword id="KW-0548">Nucleotidyltransferase</keyword>
<keyword id="KW-0804">Transcription</keyword>
<keyword id="KW-0808">Transferase</keyword>
<protein>
    <recommendedName>
        <fullName evidence="1">DNA-directed RNA polymerase subunit beta</fullName>
        <shortName evidence="1">RNAP subunit beta</shortName>
        <ecNumber evidence="1">2.7.7.6</ecNumber>
    </recommendedName>
    <alternativeName>
        <fullName evidence="1">RNA polymerase subunit beta</fullName>
    </alternativeName>
    <alternativeName>
        <fullName evidence="1">Transcriptase subunit beta</fullName>
    </alternativeName>
</protein>
<evidence type="ECO:0000255" key="1">
    <source>
        <dbReference type="HAMAP-Rule" id="MF_01321"/>
    </source>
</evidence>
<evidence type="ECO:0000256" key="2">
    <source>
        <dbReference type="SAM" id="MobiDB-lite"/>
    </source>
</evidence>
<reference key="1">
    <citation type="submission" date="2009-04" db="EMBL/GenBank/DDBJ databases">
        <title>Genome sequence of Bacillus anthracis A0248.</title>
        <authorList>
            <person name="Dodson R.J."/>
            <person name="Munk A.C."/>
            <person name="Bruce D."/>
            <person name="Detter C."/>
            <person name="Tapia R."/>
            <person name="Sutton G."/>
            <person name="Sims D."/>
            <person name="Brettin T."/>
        </authorList>
    </citation>
    <scope>NUCLEOTIDE SEQUENCE [LARGE SCALE GENOMIC DNA]</scope>
    <source>
        <strain>A0248</strain>
    </source>
</reference>
<organism>
    <name type="scientific">Bacillus anthracis (strain A0248)</name>
    <dbReference type="NCBI Taxonomy" id="592021"/>
    <lineage>
        <taxon>Bacteria</taxon>
        <taxon>Bacillati</taxon>
        <taxon>Bacillota</taxon>
        <taxon>Bacilli</taxon>
        <taxon>Bacillales</taxon>
        <taxon>Bacillaceae</taxon>
        <taxon>Bacillus</taxon>
        <taxon>Bacillus cereus group</taxon>
    </lineage>
</organism>
<dbReference type="EC" id="2.7.7.6" evidence="1"/>
<dbReference type="EMBL" id="CP001598">
    <property type="protein sequence ID" value="ACQ46691.1"/>
    <property type="molecule type" value="Genomic_DNA"/>
</dbReference>
<dbReference type="RefSeq" id="WP_000147548.1">
    <property type="nucleotide sequence ID" value="NC_012659.1"/>
</dbReference>
<dbReference type="SMR" id="C3P9P7"/>
<dbReference type="GeneID" id="45020147"/>
<dbReference type="KEGG" id="bai:BAA_0118"/>
<dbReference type="HOGENOM" id="CLU_000524_4_1_9"/>
<dbReference type="GO" id="GO:0000428">
    <property type="term" value="C:DNA-directed RNA polymerase complex"/>
    <property type="evidence" value="ECO:0007669"/>
    <property type="project" value="UniProtKB-KW"/>
</dbReference>
<dbReference type="GO" id="GO:0003677">
    <property type="term" value="F:DNA binding"/>
    <property type="evidence" value="ECO:0007669"/>
    <property type="project" value="UniProtKB-UniRule"/>
</dbReference>
<dbReference type="GO" id="GO:0003899">
    <property type="term" value="F:DNA-directed RNA polymerase activity"/>
    <property type="evidence" value="ECO:0007669"/>
    <property type="project" value="UniProtKB-UniRule"/>
</dbReference>
<dbReference type="GO" id="GO:0032549">
    <property type="term" value="F:ribonucleoside binding"/>
    <property type="evidence" value="ECO:0007669"/>
    <property type="project" value="InterPro"/>
</dbReference>
<dbReference type="GO" id="GO:0006351">
    <property type="term" value="P:DNA-templated transcription"/>
    <property type="evidence" value="ECO:0007669"/>
    <property type="project" value="UniProtKB-UniRule"/>
</dbReference>
<dbReference type="CDD" id="cd00653">
    <property type="entry name" value="RNA_pol_B_RPB2"/>
    <property type="match status" value="1"/>
</dbReference>
<dbReference type="FunFam" id="3.90.1800.10:FF:000001">
    <property type="entry name" value="DNA-directed RNA polymerase subunit beta"/>
    <property type="match status" value="1"/>
</dbReference>
<dbReference type="Gene3D" id="2.40.50.100">
    <property type="match status" value="1"/>
</dbReference>
<dbReference type="Gene3D" id="2.40.50.150">
    <property type="match status" value="1"/>
</dbReference>
<dbReference type="Gene3D" id="3.90.1100.10">
    <property type="match status" value="2"/>
</dbReference>
<dbReference type="Gene3D" id="2.30.150.10">
    <property type="entry name" value="DNA-directed RNA polymerase, beta subunit, external 1 domain"/>
    <property type="match status" value="1"/>
</dbReference>
<dbReference type="Gene3D" id="2.40.270.10">
    <property type="entry name" value="DNA-directed RNA polymerase, subunit 2, domain 6"/>
    <property type="match status" value="1"/>
</dbReference>
<dbReference type="Gene3D" id="3.90.1800.10">
    <property type="entry name" value="RNA polymerase alpha subunit dimerisation domain"/>
    <property type="match status" value="1"/>
</dbReference>
<dbReference type="Gene3D" id="3.90.1110.10">
    <property type="entry name" value="RNA polymerase Rpb2, domain 2"/>
    <property type="match status" value="1"/>
</dbReference>
<dbReference type="HAMAP" id="MF_01321">
    <property type="entry name" value="RNApol_bact_RpoB"/>
    <property type="match status" value="1"/>
</dbReference>
<dbReference type="InterPro" id="IPR042107">
    <property type="entry name" value="DNA-dir_RNA_pol_bsu_ext_1_sf"/>
</dbReference>
<dbReference type="InterPro" id="IPR019462">
    <property type="entry name" value="DNA-dir_RNA_pol_bsu_external_1"/>
</dbReference>
<dbReference type="InterPro" id="IPR015712">
    <property type="entry name" value="DNA-dir_RNA_pol_su2"/>
</dbReference>
<dbReference type="InterPro" id="IPR007120">
    <property type="entry name" value="DNA-dir_RNAP_su2_dom"/>
</dbReference>
<dbReference type="InterPro" id="IPR037033">
    <property type="entry name" value="DNA-dir_RNAP_su2_hyb_sf"/>
</dbReference>
<dbReference type="InterPro" id="IPR010243">
    <property type="entry name" value="RNA_pol_bsu_bac"/>
</dbReference>
<dbReference type="InterPro" id="IPR007121">
    <property type="entry name" value="RNA_pol_bsu_CS"/>
</dbReference>
<dbReference type="InterPro" id="IPR007644">
    <property type="entry name" value="RNA_pol_bsu_protrusion"/>
</dbReference>
<dbReference type="InterPro" id="IPR007642">
    <property type="entry name" value="RNA_pol_Rpb2_2"/>
</dbReference>
<dbReference type="InterPro" id="IPR037034">
    <property type="entry name" value="RNA_pol_Rpb2_2_sf"/>
</dbReference>
<dbReference type="InterPro" id="IPR007645">
    <property type="entry name" value="RNA_pol_Rpb2_3"/>
</dbReference>
<dbReference type="InterPro" id="IPR007641">
    <property type="entry name" value="RNA_pol_Rpb2_7"/>
</dbReference>
<dbReference type="InterPro" id="IPR014724">
    <property type="entry name" value="RNA_pol_RPB2_OB-fold"/>
</dbReference>
<dbReference type="NCBIfam" id="NF001616">
    <property type="entry name" value="PRK00405.1"/>
    <property type="match status" value="1"/>
</dbReference>
<dbReference type="NCBIfam" id="TIGR02013">
    <property type="entry name" value="rpoB"/>
    <property type="match status" value="1"/>
</dbReference>
<dbReference type="PANTHER" id="PTHR20856">
    <property type="entry name" value="DNA-DIRECTED RNA POLYMERASE I SUBUNIT 2"/>
    <property type="match status" value="1"/>
</dbReference>
<dbReference type="Pfam" id="PF04563">
    <property type="entry name" value="RNA_pol_Rpb2_1"/>
    <property type="match status" value="1"/>
</dbReference>
<dbReference type="Pfam" id="PF04561">
    <property type="entry name" value="RNA_pol_Rpb2_2"/>
    <property type="match status" value="2"/>
</dbReference>
<dbReference type="Pfam" id="PF04565">
    <property type="entry name" value="RNA_pol_Rpb2_3"/>
    <property type="match status" value="1"/>
</dbReference>
<dbReference type="Pfam" id="PF10385">
    <property type="entry name" value="RNA_pol_Rpb2_45"/>
    <property type="match status" value="1"/>
</dbReference>
<dbReference type="Pfam" id="PF00562">
    <property type="entry name" value="RNA_pol_Rpb2_6"/>
    <property type="match status" value="1"/>
</dbReference>
<dbReference type="Pfam" id="PF04560">
    <property type="entry name" value="RNA_pol_Rpb2_7"/>
    <property type="match status" value="1"/>
</dbReference>
<dbReference type="SUPFAM" id="SSF64484">
    <property type="entry name" value="beta and beta-prime subunits of DNA dependent RNA-polymerase"/>
    <property type="match status" value="1"/>
</dbReference>
<dbReference type="PROSITE" id="PS01166">
    <property type="entry name" value="RNA_POL_BETA"/>
    <property type="match status" value="1"/>
</dbReference>
<name>RPOB_BACAA</name>
<comment type="function">
    <text evidence="1">DNA-dependent RNA polymerase catalyzes the transcription of DNA into RNA using the four ribonucleoside triphosphates as substrates.</text>
</comment>
<comment type="catalytic activity">
    <reaction evidence="1">
        <text>RNA(n) + a ribonucleoside 5'-triphosphate = RNA(n+1) + diphosphate</text>
        <dbReference type="Rhea" id="RHEA:21248"/>
        <dbReference type="Rhea" id="RHEA-COMP:14527"/>
        <dbReference type="Rhea" id="RHEA-COMP:17342"/>
        <dbReference type="ChEBI" id="CHEBI:33019"/>
        <dbReference type="ChEBI" id="CHEBI:61557"/>
        <dbReference type="ChEBI" id="CHEBI:140395"/>
        <dbReference type="EC" id="2.7.7.6"/>
    </reaction>
</comment>
<comment type="subunit">
    <text evidence="1">The RNAP catalytic core consists of 2 alpha, 1 beta, 1 beta' and 1 omega subunit. When a sigma factor is associated with the core the holoenzyme is formed, which can initiate transcription.</text>
</comment>
<comment type="similarity">
    <text evidence="1">Belongs to the RNA polymerase beta chain family.</text>
</comment>
<proteinExistence type="inferred from homology"/>